<accession>A1A2J2</accession>
<gene>
    <name evidence="1" type="primary">thiM</name>
    <name type="ordered locus">BAD_1144</name>
</gene>
<evidence type="ECO:0000255" key="1">
    <source>
        <dbReference type="HAMAP-Rule" id="MF_00228"/>
    </source>
</evidence>
<keyword id="KW-0067">ATP-binding</keyword>
<keyword id="KW-0418">Kinase</keyword>
<keyword id="KW-0460">Magnesium</keyword>
<keyword id="KW-0479">Metal-binding</keyword>
<keyword id="KW-0547">Nucleotide-binding</keyword>
<keyword id="KW-1185">Reference proteome</keyword>
<keyword id="KW-0784">Thiamine biosynthesis</keyword>
<keyword id="KW-0808">Transferase</keyword>
<feature type="chain" id="PRO_0000383821" description="Hydroxyethylthiazole kinase">
    <location>
        <begin position="1"/>
        <end position="294"/>
    </location>
</feature>
<feature type="binding site" evidence="1">
    <location>
        <position position="57"/>
    </location>
    <ligand>
        <name>substrate</name>
    </ligand>
</feature>
<feature type="binding site" evidence="1">
    <location>
        <position position="132"/>
    </location>
    <ligand>
        <name>ATP</name>
        <dbReference type="ChEBI" id="CHEBI:30616"/>
    </ligand>
</feature>
<feature type="binding site" evidence="1">
    <location>
        <position position="196"/>
    </location>
    <ligand>
        <name>ATP</name>
        <dbReference type="ChEBI" id="CHEBI:30616"/>
    </ligand>
</feature>
<feature type="binding site" evidence="1">
    <location>
        <position position="223"/>
    </location>
    <ligand>
        <name>substrate</name>
    </ligand>
</feature>
<organism>
    <name type="scientific">Bifidobacterium adolescentis (strain ATCC 15703 / DSM 20083 / NCTC 11814 / E194a)</name>
    <dbReference type="NCBI Taxonomy" id="367928"/>
    <lineage>
        <taxon>Bacteria</taxon>
        <taxon>Bacillati</taxon>
        <taxon>Actinomycetota</taxon>
        <taxon>Actinomycetes</taxon>
        <taxon>Bifidobacteriales</taxon>
        <taxon>Bifidobacteriaceae</taxon>
        <taxon>Bifidobacterium</taxon>
    </lineage>
</organism>
<protein>
    <recommendedName>
        <fullName evidence="1">Hydroxyethylthiazole kinase</fullName>
        <ecNumber evidence="1">2.7.1.50</ecNumber>
    </recommendedName>
    <alternativeName>
        <fullName evidence="1">4-methyl-5-beta-hydroxyethylthiazole kinase</fullName>
        <shortName evidence="1">TH kinase</shortName>
        <shortName evidence="1">Thz kinase</shortName>
    </alternativeName>
</protein>
<reference key="1">
    <citation type="submission" date="2006-12" db="EMBL/GenBank/DDBJ databases">
        <title>Bifidobacterium adolescentis complete genome sequence.</title>
        <authorList>
            <person name="Suzuki T."/>
            <person name="Tsuda Y."/>
            <person name="Kanou N."/>
            <person name="Inoue T."/>
            <person name="Kumazaki K."/>
            <person name="Nagano S."/>
            <person name="Hirai S."/>
            <person name="Tanaka K."/>
            <person name="Watanabe K."/>
        </authorList>
    </citation>
    <scope>NUCLEOTIDE SEQUENCE [LARGE SCALE GENOMIC DNA]</scope>
    <source>
        <strain>ATCC 15703 / DSM 20083 / NCTC 11814 / E194a</strain>
    </source>
</reference>
<proteinExistence type="inferred from homology"/>
<sequence length="294" mass="30201">MSDDPSTNDALGTLRAAIKQAVTDVRGQTPLAQSFTNFVTINLVANAQLAAGGTAAMSYLPDDVIATAEIAGSNYINVGTLLPFFKNALPEIARKLHENGKTWVLDPVAAGIGETRTAILESFRDVPPTIVRGNASEIIALDAMWGLADADSTTPATRPAGVEAVDEVDAAVDAAKRLARHLAKRSPVGAGAVAVSGAVDLVTDGERTFRLPGGSAMMTKITGAGCSLGGVTATYLAVAEPLVAALAASLLYDRASEIAEVKSDGPGSFQVALLDALWNVTADQVAASDIIETN</sequence>
<comment type="function">
    <text evidence="1">Catalyzes the phosphorylation of the hydroxyl group of 4-methyl-5-beta-hydroxyethylthiazole (THZ).</text>
</comment>
<comment type="catalytic activity">
    <reaction evidence="1">
        <text>5-(2-hydroxyethyl)-4-methylthiazole + ATP = 4-methyl-5-(2-phosphooxyethyl)-thiazole + ADP + H(+)</text>
        <dbReference type="Rhea" id="RHEA:24212"/>
        <dbReference type="ChEBI" id="CHEBI:15378"/>
        <dbReference type="ChEBI" id="CHEBI:17957"/>
        <dbReference type="ChEBI" id="CHEBI:30616"/>
        <dbReference type="ChEBI" id="CHEBI:58296"/>
        <dbReference type="ChEBI" id="CHEBI:456216"/>
        <dbReference type="EC" id="2.7.1.50"/>
    </reaction>
</comment>
<comment type="cofactor">
    <cofactor evidence="1">
        <name>Mg(2+)</name>
        <dbReference type="ChEBI" id="CHEBI:18420"/>
    </cofactor>
</comment>
<comment type="pathway">
    <text evidence="1">Cofactor biosynthesis; thiamine diphosphate biosynthesis; 4-methyl-5-(2-phosphoethyl)-thiazole from 5-(2-hydroxyethyl)-4-methylthiazole: step 1/1.</text>
</comment>
<comment type="similarity">
    <text evidence="1">Belongs to the Thz kinase family.</text>
</comment>
<dbReference type="EC" id="2.7.1.50" evidence="1"/>
<dbReference type="EMBL" id="AP009256">
    <property type="protein sequence ID" value="BAF39925.1"/>
    <property type="molecule type" value="Genomic_DNA"/>
</dbReference>
<dbReference type="RefSeq" id="WP_011743478.1">
    <property type="nucleotide sequence ID" value="NC_008618.1"/>
</dbReference>
<dbReference type="SMR" id="A1A2J2"/>
<dbReference type="STRING" id="367928.BAD_1144"/>
<dbReference type="PaxDb" id="1680-BADO_1277"/>
<dbReference type="GeneID" id="4557641"/>
<dbReference type="KEGG" id="bad:BAD_1144"/>
<dbReference type="HOGENOM" id="CLU_019943_0_1_11"/>
<dbReference type="UniPathway" id="UPA00060">
    <property type="reaction ID" value="UER00139"/>
</dbReference>
<dbReference type="Proteomes" id="UP000008702">
    <property type="component" value="Chromosome"/>
</dbReference>
<dbReference type="GO" id="GO:0005524">
    <property type="term" value="F:ATP binding"/>
    <property type="evidence" value="ECO:0007669"/>
    <property type="project" value="UniProtKB-UniRule"/>
</dbReference>
<dbReference type="GO" id="GO:0004417">
    <property type="term" value="F:hydroxyethylthiazole kinase activity"/>
    <property type="evidence" value="ECO:0007669"/>
    <property type="project" value="UniProtKB-UniRule"/>
</dbReference>
<dbReference type="GO" id="GO:0000287">
    <property type="term" value="F:magnesium ion binding"/>
    <property type="evidence" value="ECO:0007669"/>
    <property type="project" value="UniProtKB-UniRule"/>
</dbReference>
<dbReference type="GO" id="GO:0009228">
    <property type="term" value="P:thiamine biosynthetic process"/>
    <property type="evidence" value="ECO:0007669"/>
    <property type="project" value="UniProtKB-KW"/>
</dbReference>
<dbReference type="GO" id="GO:0009229">
    <property type="term" value="P:thiamine diphosphate biosynthetic process"/>
    <property type="evidence" value="ECO:0007669"/>
    <property type="project" value="UniProtKB-UniRule"/>
</dbReference>
<dbReference type="CDD" id="cd01170">
    <property type="entry name" value="THZ_kinase"/>
    <property type="match status" value="1"/>
</dbReference>
<dbReference type="Gene3D" id="3.40.1190.20">
    <property type="match status" value="1"/>
</dbReference>
<dbReference type="HAMAP" id="MF_00228">
    <property type="entry name" value="Thz_kinase"/>
    <property type="match status" value="1"/>
</dbReference>
<dbReference type="InterPro" id="IPR000417">
    <property type="entry name" value="Hyethyz_kinase"/>
</dbReference>
<dbReference type="InterPro" id="IPR029056">
    <property type="entry name" value="Ribokinase-like"/>
</dbReference>
<dbReference type="Pfam" id="PF02110">
    <property type="entry name" value="HK"/>
    <property type="match status" value="1"/>
</dbReference>
<dbReference type="PIRSF" id="PIRSF000513">
    <property type="entry name" value="Thz_kinase"/>
    <property type="match status" value="1"/>
</dbReference>
<dbReference type="PRINTS" id="PR01099">
    <property type="entry name" value="HYETHTZKNASE"/>
</dbReference>
<dbReference type="SUPFAM" id="SSF53613">
    <property type="entry name" value="Ribokinase-like"/>
    <property type="match status" value="1"/>
</dbReference>
<name>THIM_BIFAA</name>